<reference key="1">
    <citation type="journal article" date="2011" name="J. Bacteriol.">
        <title>Complete genome sequence and updated annotation of Desulfovibrio alaskensis G20.</title>
        <authorList>
            <person name="Hauser L.J."/>
            <person name="Land M.L."/>
            <person name="Brown S.D."/>
            <person name="Larimer F."/>
            <person name="Keller K.L."/>
            <person name="Rapp-Giles B.J."/>
            <person name="Price M.N."/>
            <person name="Lin M."/>
            <person name="Bruce D.C."/>
            <person name="Detter J.C."/>
            <person name="Tapia R."/>
            <person name="Han C.S."/>
            <person name="Goodwin L.A."/>
            <person name="Cheng J.F."/>
            <person name="Pitluck S."/>
            <person name="Copeland A."/>
            <person name="Lucas S."/>
            <person name="Nolan M."/>
            <person name="Lapidus A.L."/>
            <person name="Palumbo A.V."/>
            <person name="Wall J.D."/>
        </authorList>
    </citation>
    <scope>NUCLEOTIDE SEQUENCE [LARGE SCALE GENOMIC DNA]</scope>
    <source>
        <strain>ATCC BAA-1058 / DSM 17464 / G20</strain>
    </source>
</reference>
<sequence length="393" mass="42545">MTVIGTPLSPVRTRIMLLGSGELGKEVAIEAMRLGAEVVAVDRYAGAPAMQVAHRSHVISMLDADALRRLIAEERPDFVVPEIEAIATDVLEELESDSLTVVPTARAARLTMNREGIRRLAAEELGLRTSPYRFAQTEDEYRRAVEELGMPCVVKPVMSSSGKGQSVVRSADDIADAWTYAQSGGRAGGGRVIVESFVDFDYEITLLTVRHCNGTSFCEPIGHRQEDGDYRQSWQPQPMSAAALEQARHMAQAVTQALGGYGLFGVELFIKGDTVWFSEVSPRPHDTGLVTIASQNLSEFALHVRAVLGLPVPVIRQYGPAASSVILAEGSSARTRFGNLQEALGEPDTSLLLFGKPEVQGRRRMGVALALGETVEQAVEKACRVSDAVKVML</sequence>
<evidence type="ECO:0000255" key="1">
    <source>
        <dbReference type="HAMAP-Rule" id="MF_01643"/>
    </source>
</evidence>
<comment type="function">
    <text evidence="1">Involved in the de novo purine biosynthesis. Catalyzes the transfer of formate to 5-phospho-ribosyl-glycinamide (GAR), producing 5-phospho-ribosyl-N-formylglycinamide (FGAR). Formate is provided by PurU via hydrolysis of 10-formyl-tetrahydrofolate.</text>
</comment>
<comment type="catalytic activity">
    <reaction evidence="1">
        <text>N(1)-(5-phospho-beta-D-ribosyl)glycinamide + formate + ATP = N(2)-formyl-N(1)-(5-phospho-beta-D-ribosyl)glycinamide + ADP + phosphate + H(+)</text>
        <dbReference type="Rhea" id="RHEA:24829"/>
        <dbReference type="ChEBI" id="CHEBI:15378"/>
        <dbReference type="ChEBI" id="CHEBI:15740"/>
        <dbReference type="ChEBI" id="CHEBI:30616"/>
        <dbReference type="ChEBI" id="CHEBI:43474"/>
        <dbReference type="ChEBI" id="CHEBI:143788"/>
        <dbReference type="ChEBI" id="CHEBI:147286"/>
        <dbReference type="ChEBI" id="CHEBI:456216"/>
        <dbReference type="EC" id="6.3.1.21"/>
    </reaction>
    <physiologicalReaction direction="left-to-right" evidence="1">
        <dbReference type="Rhea" id="RHEA:24830"/>
    </physiologicalReaction>
</comment>
<comment type="pathway">
    <text evidence="1">Purine metabolism; IMP biosynthesis via de novo pathway; N(2)-formyl-N(1)-(5-phospho-D-ribosyl)glycinamide from N(1)-(5-phospho-D-ribosyl)glycinamide (formate route): step 1/1.</text>
</comment>
<comment type="subunit">
    <text evidence="1">Homodimer.</text>
</comment>
<comment type="similarity">
    <text evidence="1">Belongs to the PurK/PurT family.</text>
</comment>
<accession>Q30XN3</accession>
<keyword id="KW-0067">ATP-binding</keyword>
<keyword id="KW-0436">Ligase</keyword>
<keyword id="KW-0460">Magnesium</keyword>
<keyword id="KW-0479">Metal-binding</keyword>
<keyword id="KW-0547">Nucleotide-binding</keyword>
<keyword id="KW-0658">Purine biosynthesis</keyword>
<keyword id="KW-1185">Reference proteome</keyword>
<name>PURT_OLEA2</name>
<protein>
    <recommendedName>
        <fullName evidence="1">Formate-dependent phosphoribosylglycinamide formyltransferase</fullName>
        <ecNumber evidence="1">6.3.1.21</ecNumber>
    </recommendedName>
    <alternativeName>
        <fullName evidence="1">5'-phosphoribosylglycinamide transformylase 2</fullName>
    </alternativeName>
    <alternativeName>
        <fullName evidence="1">Formate-dependent GAR transformylase</fullName>
    </alternativeName>
    <alternativeName>
        <fullName evidence="1">GAR transformylase 2</fullName>
        <shortName evidence="1">GART 2</shortName>
    </alternativeName>
    <alternativeName>
        <fullName evidence="1">Non-folate glycinamide ribonucleotide transformylase</fullName>
    </alternativeName>
    <alternativeName>
        <fullName evidence="1">Phosphoribosylglycinamide formyltransferase 2</fullName>
    </alternativeName>
</protein>
<proteinExistence type="inferred from homology"/>
<gene>
    <name evidence="1" type="primary">purT</name>
    <name type="ordered locus">Dde_2767</name>
</gene>
<dbReference type="EC" id="6.3.1.21" evidence="1"/>
<dbReference type="EMBL" id="CP000112">
    <property type="protein sequence ID" value="ABB39563.1"/>
    <property type="molecule type" value="Genomic_DNA"/>
</dbReference>
<dbReference type="RefSeq" id="WP_011368582.1">
    <property type="nucleotide sequence ID" value="NC_007519.1"/>
</dbReference>
<dbReference type="SMR" id="Q30XN3"/>
<dbReference type="STRING" id="207559.Dde_2767"/>
<dbReference type="KEGG" id="dde:Dde_2767"/>
<dbReference type="eggNOG" id="COG0027">
    <property type="taxonomic scope" value="Bacteria"/>
</dbReference>
<dbReference type="HOGENOM" id="CLU_011534_1_3_7"/>
<dbReference type="UniPathway" id="UPA00074">
    <property type="reaction ID" value="UER00127"/>
</dbReference>
<dbReference type="Proteomes" id="UP000002710">
    <property type="component" value="Chromosome"/>
</dbReference>
<dbReference type="GO" id="GO:0005829">
    <property type="term" value="C:cytosol"/>
    <property type="evidence" value="ECO:0007669"/>
    <property type="project" value="TreeGrafter"/>
</dbReference>
<dbReference type="GO" id="GO:0005524">
    <property type="term" value="F:ATP binding"/>
    <property type="evidence" value="ECO:0007669"/>
    <property type="project" value="UniProtKB-UniRule"/>
</dbReference>
<dbReference type="GO" id="GO:0000287">
    <property type="term" value="F:magnesium ion binding"/>
    <property type="evidence" value="ECO:0007669"/>
    <property type="project" value="InterPro"/>
</dbReference>
<dbReference type="GO" id="GO:0043815">
    <property type="term" value="F:phosphoribosylglycinamide formyltransferase 2 activity"/>
    <property type="evidence" value="ECO:0007669"/>
    <property type="project" value="UniProtKB-UniRule"/>
</dbReference>
<dbReference type="GO" id="GO:0004644">
    <property type="term" value="F:phosphoribosylglycinamide formyltransferase activity"/>
    <property type="evidence" value="ECO:0007669"/>
    <property type="project" value="InterPro"/>
</dbReference>
<dbReference type="GO" id="GO:0006189">
    <property type="term" value="P:'de novo' IMP biosynthetic process"/>
    <property type="evidence" value="ECO:0007669"/>
    <property type="project" value="UniProtKB-UniRule"/>
</dbReference>
<dbReference type="FunFam" id="3.30.1490.20:FF:000013">
    <property type="entry name" value="Formate-dependent phosphoribosylglycinamide formyltransferase"/>
    <property type="match status" value="1"/>
</dbReference>
<dbReference type="FunFam" id="3.30.470.20:FF:000027">
    <property type="entry name" value="Formate-dependent phosphoribosylglycinamide formyltransferase"/>
    <property type="match status" value="1"/>
</dbReference>
<dbReference type="FunFam" id="3.40.50.20:FF:000007">
    <property type="entry name" value="Formate-dependent phosphoribosylglycinamide formyltransferase"/>
    <property type="match status" value="1"/>
</dbReference>
<dbReference type="Gene3D" id="3.40.50.20">
    <property type="match status" value="1"/>
</dbReference>
<dbReference type="Gene3D" id="3.30.1490.20">
    <property type="entry name" value="ATP-grasp fold, A domain"/>
    <property type="match status" value="1"/>
</dbReference>
<dbReference type="Gene3D" id="3.30.470.20">
    <property type="entry name" value="ATP-grasp fold, B domain"/>
    <property type="match status" value="1"/>
</dbReference>
<dbReference type="HAMAP" id="MF_01643">
    <property type="entry name" value="PurT"/>
    <property type="match status" value="1"/>
</dbReference>
<dbReference type="InterPro" id="IPR011761">
    <property type="entry name" value="ATP-grasp"/>
</dbReference>
<dbReference type="InterPro" id="IPR003135">
    <property type="entry name" value="ATP-grasp_carboxylate-amine"/>
</dbReference>
<dbReference type="InterPro" id="IPR013815">
    <property type="entry name" value="ATP_grasp_subdomain_1"/>
</dbReference>
<dbReference type="InterPro" id="IPR016185">
    <property type="entry name" value="PreATP-grasp_dom_sf"/>
</dbReference>
<dbReference type="InterPro" id="IPR005862">
    <property type="entry name" value="PurT"/>
</dbReference>
<dbReference type="InterPro" id="IPR054350">
    <property type="entry name" value="PurT/PurK_preATP-grasp"/>
</dbReference>
<dbReference type="InterPro" id="IPR048740">
    <property type="entry name" value="PurT_C"/>
</dbReference>
<dbReference type="NCBIfam" id="NF006766">
    <property type="entry name" value="PRK09288.1"/>
    <property type="match status" value="1"/>
</dbReference>
<dbReference type="NCBIfam" id="TIGR01142">
    <property type="entry name" value="purT"/>
    <property type="match status" value="1"/>
</dbReference>
<dbReference type="PANTHER" id="PTHR43055">
    <property type="entry name" value="FORMATE-DEPENDENT PHOSPHORIBOSYLGLYCINAMIDE FORMYLTRANSFERASE"/>
    <property type="match status" value="1"/>
</dbReference>
<dbReference type="PANTHER" id="PTHR43055:SF1">
    <property type="entry name" value="FORMATE-DEPENDENT PHOSPHORIBOSYLGLYCINAMIDE FORMYLTRANSFERASE"/>
    <property type="match status" value="1"/>
</dbReference>
<dbReference type="Pfam" id="PF02222">
    <property type="entry name" value="ATP-grasp"/>
    <property type="match status" value="1"/>
</dbReference>
<dbReference type="Pfam" id="PF21244">
    <property type="entry name" value="PurT_C"/>
    <property type="match status" value="1"/>
</dbReference>
<dbReference type="Pfam" id="PF22660">
    <property type="entry name" value="RS_preATP-grasp-like"/>
    <property type="match status" value="1"/>
</dbReference>
<dbReference type="SUPFAM" id="SSF56059">
    <property type="entry name" value="Glutathione synthetase ATP-binding domain-like"/>
    <property type="match status" value="1"/>
</dbReference>
<dbReference type="SUPFAM" id="SSF52440">
    <property type="entry name" value="PreATP-grasp domain"/>
    <property type="match status" value="1"/>
</dbReference>
<dbReference type="PROSITE" id="PS50975">
    <property type="entry name" value="ATP_GRASP"/>
    <property type="match status" value="1"/>
</dbReference>
<feature type="chain" id="PRO_0000319156" description="Formate-dependent phosphoribosylglycinamide formyltransferase">
    <location>
        <begin position="1"/>
        <end position="393"/>
    </location>
</feature>
<feature type="domain" description="ATP-grasp" evidence="1">
    <location>
        <begin position="119"/>
        <end position="308"/>
    </location>
</feature>
<feature type="binding site" evidence="1">
    <location>
        <begin position="22"/>
        <end position="23"/>
    </location>
    <ligand>
        <name>N(1)-(5-phospho-beta-D-ribosyl)glycinamide</name>
        <dbReference type="ChEBI" id="CHEBI:143788"/>
    </ligand>
</feature>
<feature type="binding site" evidence="1">
    <location>
        <position position="82"/>
    </location>
    <ligand>
        <name>N(1)-(5-phospho-beta-D-ribosyl)glycinamide</name>
        <dbReference type="ChEBI" id="CHEBI:143788"/>
    </ligand>
</feature>
<feature type="binding site" evidence="1">
    <location>
        <position position="114"/>
    </location>
    <ligand>
        <name>ATP</name>
        <dbReference type="ChEBI" id="CHEBI:30616"/>
    </ligand>
</feature>
<feature type="binding site" evidence="1">
    <location>
        <position position="155"/>
    </location>
    <ligand>
        <name>ATP</name>
        <dbReference type="ChEBI" id="CHEBI:30616"/>
    </ligand>
</feature>
<feature type="binding site" evidence="1">
    <location>
        <begin position="160"/>
        <end position="165"/>
    </location>
    <ligand>
        <name>ATP</name>
        <dbReference type="ChEBI" id="CHEBI:30616"/>
    </ligand>
</feature>
<feature type="binding site" evidence="1">
    <location>
        <begin position="195"/>
        <end position="198"/>
    </location>
    <ligand>
        <name>ATP</name>
        <dbReference type="ChEBI" id="CHEBI:30616"/>
    </ligand>
</feature>
<feature type="binding site" evidence="1">
    <location>
        <position position="203"/>
    </location>
    <ligand>
        <name>ATP</name>
        <dbReference type="ChEBI" id="CHEBI:30616"/>
    </ligand>
</feature>
<feature type="binding site" evidence="1">
    <location>
        <position position="267"/>
    </location>
    <ligand>
        <name>Mg(2+)</name>
        <dbReference type="ChEBI" id="CHEBI:18420"/>
    </ligand>
</feature>
<feature type="binding site" evidence="1">
    <location>
        <position position="279"/>
    </location>
    <ligand>
        <name>Mg(2+)</name>
        <dbReference type="ChEBI" id="CHEBI:18420"/>
    </ligand>
</feature>
<feature type="binding site" evidence="1">
    <location>
        <position position="286"/>
    </location>
    <ligand>
        <name>N(1)-(5-phospho-beta-D-ribosyl)glycinamide</name>
        <dbReference type="ChEBI" id="CHEBI:143788"/>
    </ligand>
</feature>
<feature type="binding site" evidence="1">
    <location>
        <position position="356"/>
    </location>
    <ligand>
        <name>N(1)-(5-phospho-beta-D-ribosyl)glycinamide</name>
        <dbReference type="ChEBI" id="CHEBI:143788"/>
    </ligand>
</feature>
<feature type="binding site" evidence="1">
    <location>
        <begin position="363"/>
        <end position="364"/>
    </location>
    <ligand>
        <name>N(1)-(5-phospho-beta-D-ribosyl)glycinamide</name>
        <dbReference type="ChEBI" id="CHEBI:143788"/>
    </ligand>
</feature>
<organism>
    <name type="scientific">Oleidesulfovibrio alaskensis (strain ATCC BAA-1058 / DSM 17464 / G20)</name>
    <name type="common">Desulfovibrio alaskensis</name>
    <dbReference type="NCBI Taxonomy" id="207559"/>
    <lineage>
        <taxon>Bacteria</taxon>
        <taxon>Pseudomonadati</taxon>
        <taxon>Thermodesulfobacteriota</taxon>
        <taxon>Desulfovibrionia</taxon>
        <taxon>Desulfovibrionales</taxon>
        <taxon>Desulfovibrionaceae</taxon>
        <taxon>Oleidesulfovibrio</taxon>
    </lineage>
</organism>